<organism>
    <name type="scientific">Lychas mucronatus</name>
    <name type="common">Chinese swimming scorpion</name>
    <dbReference type="NCBI Taxonomy" id="172552"/>
    <lineage>
        <taxon>Eukaryota</taxon>
        <taxon>Metazoa</taxon>
        <taxon>Ecdysozoa</taxon>
        <taxon>Arthropoda</taxon>
        <taxon>Chelicerata</taxon>
        <taxon>Arachnida</taxon>
        <taxon>Scorpiones</taxon>
        <taxon>Buthida</taxon>
        <taxon>Buthoidea</taxon>
        <taxon>Buthidae</taxon>
        <taxon>Lychas</taxon>
    </lineage>
</organism>
<sequence>MNKRVLLVIFFVTLLVADEVNSFSFFRKAKGFLKKIWKSKIARRLREKGMKALKNYANDVLNGPAEAPAPAAAAPEEPPVEQRRRRR</sequence>
<proteinExistence type="inferred from homology"/>
<comment type="function">
    <text evidence="1">Inhibits angiotensin-converting enzyme (ACE), but does not serve as substrate for the enzyme. Potentiates bradykinin (BK) on the isolated guinea pig ileum as well as the isolated rat uterus for contraction. Also potentiates in vivo the depressor effect of BK on arterial blood pressure in the normotensive anesthetized rat.</text>
</comment>
<comment type="subcellular location">
    <subcellularLocation>
        <location evidence="1">Secreted</location>
    </subcellularLocation>
</comment>
<comment type="tissue specificity">
    <text evidence="4">Expressed by the venom gland.</text>
</comment>
<comment type="similarity">
    <text evidence="4">Belongs to the non-disulfide-bridged peptide (NDBP) superfamily. Long chain multifunctional peptide (group 2) family.</text>
</comment>
<accession>D9U2B7</accession>
<evidence type="ECO:0000250" key="1"/>
<evidence type="ECO:0000256" key="2">
    <source>
        <dbReference type="SAM" id="MobiDB-lite"/>
    </source>
</evidence>
<evidence type="ECO:0000303" key="3">
    <source>
    </source>
</evidence>
<evidence type="ECO:0000305" key="4"/>
<feature type="signal peptide" evidence="4">
    <location>
        <begin position="1"/>
        <end position="22"/>
    </location>
</feature>
<feature type="chain" id="PRO_0000403873" description="Bradykinin-potentiating peptide NDBP12">
    <location>
        <begin position="23"/>
        <end position="82"/>
    </location>
</feature>
<feature type="region of interest" description="Disordered" evidence="2">
    <location>
        <begin position="64"/>
        <end position="87"/>
    </location>
</feature>
<feature type="compositionally biased region" description="Low complexity" evidence="2">
    <location>
        <begin position="64"/>
        <end position="75"/>
    </location>
</feature>
<reference key="1">
    <citation type="journal article" date="2010" name="BMC Genomics">
        <title>Comparative venom gland transcriptome analysis of the scorpion Lychas mucronatus reveals intraspecific toxic gene diversity and new venomous components.</title>
        <authorList>
            <person name="Zhao R."/>
            <person name="Ma Y."/>
            <person name="He Y."/>
            <person name="Di Z."/>
            <person name="Wu Y.-L."/>
            <person name="Cao Z.-J."/>
            <person name="Li W.-X."/>
        </authorList>
    </citation>
    <scope>NUCLEOTIDE SEQUENCE [MRNA]</scope>
    <source>
        <strain>Hainan</strain>
        <tissue>Venom gland</tissue>
    </source>
</reference>
<protein>
    <recommendedName>
        <fullName evidence="3">Bradykinin-potentiating peptide NDBP12</fullName>
        <shortName evidence="3">BPP-12</shortName>
    </recommendedName>
</protein>
<dbReference type="EMBL" id="EU163895">
    <property type="protein sequence ID" value="ABY26704.1"/>
    <property type="molecule type" value="mRNA"/>
</dbReference>
<dbReference type="SMR" id="D9U2B7"/>
<dbReference type="GO" id="GO:0005576">
    <property type="term" value="C:extracellular region"/>
    <property type="evidence" value="ECO:0007669"/>
    <property type="project" value="UniProtKB-SubCell"/>
</dbReference>
<dbReference type="GO" id="GO:0030414">
    <property type="term" value="F:peptidase inhibitor activity"/>
    <property type="evidence" value="ECO:0007669"/>
    <property type="project" value="UniProtKB-KW"/>
</dbReference>
<dbReference type="GO" id="GO:0090729">
    <property type="term" value="F:toxin activity"/>
    <property type="evidence" value="ECO:0007669"/>
    <property type="project" value="UniProtKB-KW"/>
</dbReference>
<dbReference type="GO" id="GO:0008217">
    <property type="term" value="P:regulation of blood pressure"/>
    <property type="evidence" value="ECO:0007669"/>
    <property type="project" value="UniProtKB-KW"/>
</dbReference>
<keyword id="KW-0165">Cleavage on pair of basic residues</keyword>
<keyword id="KW-0382">Hypotensive agent</keyword>
<keyword id="KW-0481">Metalloenzyme inhibitor</keyword>
<keyword id="KW-0483">Metalloprotease inhibitor</keyword>
<keyword id="KW-0646">Protease inhibitor</keyword>
<keyword id="KW-0964">Secreted</keyword>
<keyword id="KW-0732">Signal</keyword>
<keyword id="KW-0800">Toxin</keyword>
<name>NDBP_LYCMC</name>